<proteinExistence type="inferred from homology"/>
<organism>
    <name type="scientific">Pseudomonas savastanoi pv. phaseolicola (strain 1448A / Race 6)</name>
    <name type="common">Pseudomonas syringae pv. phaseolicola (strain 1448A / Race 6)</name>
    <dbReference type="NCBI Taxonomy" id="264730"/>
    <lineage>
        <taxon>Bacteria</taxon>
        <taxon>Pseudomonadati</taxon>
        <taxon>Pseudomonadota</taxon>
        <taxon>Gammaproteobacteria</taxon>
        <taxon>Pseudomonadales</taxon>
        <taxon>Pseudomonadaceae</taxon>
        <taxon>Pseudomonas</taxon>
    </lineage>
</organism>
<feature type="chain" id="PRO_0000375340" description="YcgL domain-containing protein PSPPH_1548">
    <location>
        <begin position="1"/>
        <end position="97"/>
    </location>
</feature>
<feature type="domain" description="YcgL" evidence="1">
    <location>
        <begin position="3"/>
        <end position="87"/>
    </location>
</feature>
<gene>
    <name type="ordered locus">PSPPH_1548</name>
</gene>
<dbReference type="EMBL" id="CP000058">
    <property type="protein sequence ID" value="AAZ36370.1"/>
    <property type="molecule type" value="Genomic_DNA"/>
</dbReference>
<dbReference type="RefSeq" id="WP_003407219.1">
    <property type="nucleotide sequence ID" value="NC_005773.3"/>
</dbReference>
<dbReference type="SMR" id="Q48LC5"/>
<dbReference type="KEGG" id="psp:PSPPH_1548"/>
<dbReference type="eggNOG" id="COG3100">
    <property type="taxonomic scope" value="Bacteria"/>
</dbReference>
<dbReference type="HOGENOM" id="CLU_155118_2_0_6"/>
<dbReference type="Proteomes" id="UP000000551">
    <property type="component" value="Chromosome"/>
</dbReference>
<dbReference type="Gene3D" id="3.10.510.20">
    <property type="entry name" value="YcgL domain"/>
    <property type="match status" value="1"/>
</dbReference>
<dbReference type="HAMAP" id="MF_01866">
    <property type="entry name" value="UPF0745"/>
    <property type="match status" value="1"/>
</dbReference>
<dbReference type="InterPro" id="IPR038068">
    <property type="entry name" value="YcgL-like_sf"/>
</dbReference>
<dbReference type="InterPro" id="IPR027354">
    <property type="entry name" value="YcgL_dom"/>
</dbReference>
<dbReference type="PANTHER" id="PTHR38109">
    <property type="entry name" value="PROTEIN YCGL"/>
    <property type="match status" value="1"/>
</dbReference>
<dbReference type="PANTHER" id="PTHR38109:SF1">
    <property type="entry name" value="PROTEIN YCGL"/>
    <property type="match status" value="1"/>
</dbReference>
<dbReference type="Pfam" id="PF05166">
    <property type="entry name" value="YcgL"/>
    <property type="match status" value="1"/>
</dbReference>
<dbReference type="SUPFAM" id="SSF160191">
    <property type="entry name" value="YcgL-like"/>
    <property type="match status" value="1"/>
</dbReference>
<dbReference type="PROSITE" id="PS51648">
    <property type="entry name" value="YCGL"/>
    <property type="match status" value="1"/>
</dbReference>
<reference key="1">
    <citation type="journal article" date="2005" name="J. Bacteriol.">
        <title>Whole-genome sequence analysis of Pseudomonas syringae pv. phaseolicola 1448A reveals divergence among pathovars in genes involved in virulence and transposition.</title>
        <authorList>
            <person name="Joardar V."/>
            <person name="Lindeberg M."/>
            <person name="Jackson R.W."/>
            <person name="Selengut J."/>
            <person name="Dodson R."/>
            <person name="Brinkac L.M."/>
            <person name="Daugherty S.C."/>
            <person name="DeBoy R.T."/>
            <person name="Durkin A.S."/>
            <person name="Gwinn Giglio M."/>
            <person name="Madupu R."/>
            <person name="Nelson W.C."/>
            <person name="Rosovitz M.J."/>
            <person name="Sullivan S.A."/>
            <person name="Crabtree J."/>
            <person name="Creasy T."/>
            <person name="Davidsen T.M."/>
            <person name="Haft D.H."/>
            <person name="Zafar N."/>
            <person name="Zhou L."/>
            <person name="Halpin R."/>
            <person name="Holley T."/>
            <person name="Khouri H.M."/>
            <person name="Feldblyum T.V."/>
            <person name="White O."/>
            <person name="Fraser C.M."/>
            <person name="Chatterjee A.K."/>
            <person name="Cartinhour S."/>
            <person name="Schneider D."/>
            <person name="Mansfield J.W."/>
            <person name="Collmer A."/>
            <person name="Buell R."/>
        </authorList>
    </citation>
    <scope>NUCLEOTIDE SEQUENCE [LARGE SCALE GENOMIC DNA]</scope>
    <source>
        <strain>1448A / Race 6</strain>
    </source>
</reference>
<evidence type="ECO:0000255" key="1">
    <source>
        <dbReference type="HAMAP-Rule" id="MF_01866"/>
    </source>
</evidence>
<sequence>MKRICSIYRSPKRNEMYLYVLKSDVLKRVPPELLVAFGKPVHAFDLVLSPERALSREDINVVLENLDSQGYHLQMPPAEDDYIEHLPEELLRRNDPM</sequence>
<protein>
    <recommendedName>
        <fullName evidence="1">YcgL domain-containing protein PSPPH_1548</fullName>
    </recommendedName>
</protein>
<name>Y1548_PSE14</name>
<accession>Q48LC5</accession>